<sequence>MSNQMNTMDIKEILKYLPHRYPFLLIDRVLDYTPGVSLQAIKNVSINEPFFQGHFPIQPVMPGVLILEAMAQATGLLAFKTMSSDVPPPGVLYYFAGIDNARFRRVVEPGDQIHFDVKMIKERRGIGVFYGEAKVDGEVVCSAEIMCARREISQ</sequence>
<feature type="chain" id="PRO_1000049860" description="3-hydroxyacyl-[acyl-carrier-protein] dehydratase FabZ">
    <location>
        <begin position="1"/>
        <end position="154"/>
    </location>
</feature>
<feature type="active site" evidence="1">
    <location>
        <position position="54"/>
    </location>
</feature>
<keyword id="KW-0963">Cytoplasm</keyword>
<keyword id="KW-0441">Lipid A biosynthesis</keyword>
<keyword id="KW-0444">Lipid biosynthesis</keyword>
<keyword id="KW-0443">Lipid metabolism</keyword>
<keyword id="KW-0456">Lyase</keyword>
<gene>
    <name evidence="1" type="primary">fabZ</name>
    <name type="ordered locus">Shew185_1456</name>
</gene>
<comment type="function">
    <text evidence="1">Involved in unsaturated fatty acids biosynthesis. Catalyzes the dehydration of short chain beta-hydroxyacyl-ACPs and long chain saturated and unsaturated beta-hydroxyacyl-ACPs.</text>
</comment>
<comment type="catalytic activity">
    <reaction evidence="1">
        <text>a (3R)-hydroxyacyl-[ACP] = a (2E)-enoyl-[ACP] + H2O</text>
        <dbReference type="Rhea" id="RHEA:13097"/>
        <dbReference type="Rhea" id="RHEA-COMP:9925"/>
        <dbReference type="Rhea" id="RHEA-COMP:9945"/>
        <dbReference type="ChEBI" id="CHEBI:15377"/>
        <dbReference type="ChEBI" id="CHEBI:78784"/>
        <dbReference type="ChEBI" id="CHEBI:78827"/>
        <dbReference type="EC" id="4.2.1.59"/>
    </reaction>
</comment>
<comment type="subcellular location">
    <subcellularLocation>
        <location evidence="1">Cytoplasm</location>
    </subcellularLocation>
</comment>
<comment type="similarity">
    <text evidence="1">Belongs to the thioester dehydratase family. FabZ subfamily.</text>
</comment>
<organism>
    <name type="scientific">Shewanella baltica (strain OS185)</name>
    <dbReference type="NCBI Taxonomy" id="402882"/>
    <lineage>
        <taxon>Bacteria</taxon>
        <taxon>Pseudomonadati</taxon>
        <taxon>Pseudomonadota</taxon>
        <taxon>Gammaproteobacteria</taxon>
        <taxon>Alteromonadales</taxon>
        <taxon>Shewanellaceae</taxon>
        <taxon>Shewanella</taxon>
    </lineage>
</organism>
<protein>
    <recommendedName>
        <fullName evidence="1">3-hydroxyacyl-[acyl-carrier-protein] dehydratase FabZ</fullName>
        <ecNumber evidence="1">4.2.1.59</ecNumber>
    </recommendedName>
    <alternativeName>
        <fullName evidence="1">(3R)-hydroxymyristoyl-[acyl-carrier-protein] dehydratase</fullName>
        <shortName evidence="1">(3R)-hydroxymyristoyl-ACP dehydrase</shortName>
    </alternativeName>
    <alternativeName>
        <fullName evidence="1">Beta-hydroxyacyl-ACP dehydratase</fullName>
    </alternativeName>
</protein>
<name>FABZ_SHEB8</name>
<evidence type="ECO:0000255" key="1">
    <source>
        <dbReference type="HAMAP-Rule" id="MF_00406"/>
    </source>
</evidence>
<reference key="1">
    <citation type="submission" date="2007-07" db="EMBL/GenBank/DDBJ databases">
        <title>Complete sequence of chromosome of Shewanella baltica OS185.</title>
        <authorList>
            <consortium name="US DOE Joint Genome Institute"/>
            <person name="Copeland A."/>
            <person name="Lucas S."/>
            <person name="Lapidus A."/>
            <person name="Barry K."/>
            <person name="Glavina del Rio T."/>
            <person name="Dalin E."/>
            <person name="Tice H."/>
            <person name="Pitluck S."/>
            <person name="Sims D."/>
            <person name="Brettin T."/>
            <person name="Bruce D."/>
            <person name="Detter J.C."/>
            <person name="Han C."/>
            <person name="Schmutz J."/>
            <person name="Larimer F."/>
            <person name="Land M."/>
            <person name="Hauser L."/>
            <person name="Kyrpides N."/>
            <person name="Mikhailova N."/>
            <person name="Brettar I."/>
            <person name="Rodrigues J."/>
            <person name="Konstantinidis K."/>
            <person name="Tiedje J."/>
            <person name="Richardson P."/>
        </authorList>
    </citation>
    <scope>NUCLEOTIDE SEQUENCE [LARGE SCALE GENOMIC DNA]</scope>
    <source>
        <strain>OS185</strain>
    </source>
</reference>
<accession>A6WLB7</accession>
<dbReference type="EC" id="4.2.1.59" evidence="1"/>
<dbReference type="EMBL" id="CP000753">
    <property type="protein sequence ID" value="ABS07606.1"/>
    <property type="molecule type" value="Genomic_DNA"/>
</dbReference>
<dbReference type="RefSeq" id="WP_006080990.1">
    <property type="nucleotide sequence ID" value="NC_009665.1"/>
</dbReference>
<dbReference type="SMR" id="A6WLB7"/>
<dbReference type="GeneID" id="11771739"/>
<dbReference type="KEGG" id="sbm:Shew185_1456"/>
<dbReference type="HOGENOM" id="CLU_078912_1_0_6"/>
<dbReference type="GO" id="GO:0005737">
    <property type="term" value="C:cytoplasm"/>
    <property type="evidence" value="ECO:0007669"/>
    <property type="project" value="UniProtKB-SubCell"/>
</dbReference>
<dbReference type="GO" id="GO:0016020">
    <property type="term" value="C:membrane"/>
    <property type="evidence" value="ECO:0007669"/>
    <property type="project" value="GOC"/>
</dbReference>
<dbReference type="GO" id="GO:0019171">
    <property type="term" value="F:(3R)-hydroxyacyl-[acyl-carrier-protein] dehydratase activity"/>
    <property type="evidence" value="ECO:0007669"/>
    <property type="project" value="UniProtKB-EC"/>
</dbReference>
<dbReference type="GO" id="GO:0006633">
    <property type="term" value="P:fatty acid biosynthetic process"/>
    <property type="evidence" value="ECO:0007669"/>
    <property type="project" value="UniProtKB-UniRule"/>
</dbReference>
<dbReference type="GO" id="GO:0009245">
    <property type="term" value="P:lipid A biosynthetic process"/>
    <property type="evidence" value="ECO:0007669"/>
    <property type="project" value="UniProtKB-UniRule"/>
</dbReference>
<dbReference type="CDD" id="cd01288">
    <property type="entry name" value="FabZ"/>
    <property type="match status" value="1"/>
</dbReference>
<dbReference type="FunFam" id="3.10.129.10:FF:000001">
    <property type="entry name" value="3-hydroxyacyl-[acyl-carrier-protein] dehydratase FabZ"/>
    <property type="match status" value="1"/>
</dbReference>
<dbReference type="Gene3D" id="3.10.129.10">
    <property type="entry name" value="Hotdog Thioesterase"/>
    <property type="match status" value="1"/>
</dbReference>
<dbReference type="HAMAP" id="MF_00406">
    <property type="entry name" value="FabZ"/>
    <property type="match status" value="1"/>
</dbReference>
<dbReference type="InterPro" id="IPR013114">
    <property type="entry name" value="FabA_FabZ"/>
</dbReference>
<dbReference type="InterPro" id="IPR010084">
    <property type="entry name" value="FabZ"/>
</dbReference>
<dbReference type="InterPro" id="IPR029069">
    <property type="entry name" value="HotDog_dom_sf"/>
</dbReference>
<dbReference type="NCBIfam" id="TIGR01750">
    <property type="entry name" value="fabZ"/>
    <property type="match status" value="1"/>
</dbReference>
<dbReference type="NCBIfam" id="NF000582">
    <property type="entry name" value="PRK00006.1"/>
    <property type="match status" value="1"/>
</dbReference>
<dbReference type="PANTHER" id="PTHR30272">
    <property type="entry name" value="3-HYDROXYACYL-[ACYL-CARRIER-PROTEIN] DEHYDRATASE"/>
    <property type="match status" value="1"/>
</dbReference>
<dbReference type="PANTHER" id="PTHR30272:SF1">
    <property type="entry name" value="3-HYDROXYACYL-[ACYL-CARRIER-PROTEIN] DEHYDRATASE"/>
    <property type="match status" value="1"/>
</dbReference>
<dbReference type="Pfam" id="PF07977">
    <property type="entry name" value="FabA"/>
    <property type="match status" value="1"/>
</dbReference>
<dbReference type="SUPFAM" id="SSF54637">
    <property type="entry name" value="Thioesterase/thiol ester dehydrase-isomerase"/>
    <property type="match status" value="1"/>
</dbReference>
<proteinExistence type="inferred from homology"/>